<accession>P26219</accession>
<keyword id="KW-0997">Cell inner membrane</keyword>
<keyword id="KW-1003">Cell membrane</keyword>
<keyword id="KW-0378">Hydrolase</keyword>
<keyword id="KW-0444">Lipid biosynthesis</keyword>
<keyword id="KW-0443">Lipid metabolism</keyword>
<keyword id="KW-0472">Membrane</keyword>
<keyword id="KW-0594">Phospholipid biosynthesis</keyword>
<keyword id="KW-1208">Phospholipid metabolism</keyword>
<keyword id="KW-1185">Reference proteome</keyword>
<keyword id="KW-0812">Transmembrane</keyword>
<keyword id="KW-1133">Transmembrane helix</keyword>
<sequence length="251" mass="28368">MKKTGYFLLAVIVIVAAAGVGYWKFSGNPDALREIVLEQCLPDQLQHQNPAPCAEVKPRAGYVVFKDRHGPLQYLLMPTYRINGTESPLLLEPATPNFFWLAWQARGYMSKKYGHDIPDSAVSLAINSRLGRSQDHLHIHISCIRPDVREQLDNDLTRISTRWLPLPGGLMGHEYLARRVTESELAQRSPFMMLAEEVPEARDHMGRYALAVVRQSDDSFVLLATERNLLTFNRASAEEIQDHSCAILSSR</sequence>
<evidence type="ECO:0000255" key="1"/>
<evidence type="ECO:0000305" key="2"/>
<evidence type="ECO:0000305" key="3">
    <source>
    </source>
</evidence>
<proteinExistence type="inferred from homology"/>
<name>CDH_SALTY</name>
<reference key="1">
    <citation type="journal article" date="1989" name="Mol. Microbiol.">
        <title>Isolation, molecular characterization and expression of the ushB gene of Salmonella typhimurium which encodes a membrane-bound UDP-sugar hydrolase.</title>
        <authorList>
            <person name="Garrett A.R."/>
            <person name="Johnson L.A."/>
            <person name="Beacham I.R."/>
        </authorList>
    </citation>
    <scope>NUCLEOTIDE SEQUENCE [GENOMIC DNA]</scope>
    <source>
        <strain>LT2</strain>
    </source>
</reference>
<reference key="2">
    <citation type="journal article" date="2001" name="Nature">
        <title>Complete genome sequence of Salmonella enterica serovar Typhimurium LT2.</title>
        <authorList>
            <person name="McClelland M."/>
            <person name="Sanderson K.E."/>
            <person name="Spieth J."/>
            <person name="Clifton S.W."/>
            <person name="Latreille P."/>
            <person name="Courtney L."/>
            <person name="Porwollik S."/>
            <person name="Ali J."/>
            <person name="Dante M."/>
            <person name="Du F."/>
            <person name="Hou S."/>
            <person name="Layman D."/>
            <person name="Leonard S."/>
            <person name="Nguyen C."/>
            <person name="Scott K."/>
            <person name="Holmes A."/>
            <person name="Grewal N."/>
            <person name="Mulvaney E."/>
            <person name="Ryan E."/>
            <person name="Sun H."/>
            <person name="Florea L."/>
            <person name="Miller W."/>
            <person name="Stoneking T."/>
            <person name="Nhan M."/>
            <person name="Waterston R."/>
            <person name="Wilson R.K."/>
        </authorList>
    </citation>
    <scope>NUCLEOTIDE SEQUENCE [LARGE SCALE GENOMIC DNA]</scope>
    <source>
        <strain>LT2 / SGSC1412 / ATCC 700720</strain>
    </source>
</reference>
<organism>
    <name type="scientific">Salmonella typhimurium (strain LT2 / SGSC1412 / ATCC 700720)</name>
    <dbReference type="NCBI Taxonomy" id="99287"/>
    <lineage>
        <taxon>Bacteria</taxon>
        <taxon>Pseudomonadati</taxon>
        <taxon>Pseudomonadota</taxon>
        <taxon>Gammaproteobacteria</taxon>
        <taxon>Enterobacterales</taxon>
        <taxon>Enterobacteriaceae</taxon>
        <taxon>Salmonella</taxon>
    </lineage>
</organism>
<dbReference type="EC" id="3.6.1.26"/>
<dbReference type="EMBL" id="X13380">
    <property type="protein sequence ID" value="CAA31757.1"/>
    <property type="molecule type" value="Genomic_DNA"/>
</dbReference>
<dbReference type="EMBL" id="AE006468">
    <property type="protein sequence ID" value="AAL22904.1"/>
    <property type="molecule type" value="Genomic_DNA"/>
</dbReference>
<dbReference type="PIR" id="S04172">
    <property type="entry name" value="S04172"/>
</dbReference>
<dbReference type="RefSeq" id="NP_462945.1">
    <property type="nucleotide sequence ID" value="NC_003197.2"/>
</dbReference>
<dbReference type="RefSeq" id="WP_000750761.1">
    <property type="nucleotide sequence ID" value="NC_003197.2"/>
</dbReference>
<dbReference type="SMR" id="P26219"/>
<dbReference type="STRING" id="99287.STM4064"/>
<dbReference type="PaxDb" id="99287-STM4064"/>
<dbReference type="GeneID" id="1255591"/>
<dbReference type="KEGG" id="stm:STM4064"/>
<dbReference type="PATRIC" id="fig|99287.12.peg.4284"/>
<dbReference type="HOGENOM" id="CLU_077117_0_1_6"/>
<dbReference type="PhylomeDB" id="P26219"/>
<dbReference type="BioCyc" id="SENT99287:STM4064-MONOMER"/>
<dbReference type="UniPathway" id="UPA00609">
    <property type="reaction ID" value="UER00664"/>
</dbReference>
<dbReference type="Proteomes" id="UP000001014">
    <property type="component" value="Chromosome"/>
</dbReference>
<dbReference type="GO" id="GO:0005886">
    <property type="term" value="C:plasma membrane"/>
    <property type="evidence" value="ECO:0007669"/>
    <property type="project" value="UniProtKB-SubCell"/>
</dbReference>
<dbReference type="GO" id="GO:0008715">
    <property type="term" value="F:CDP-diacylglycerol diphosphatase activity"/>
    <property type="evidence" value="ECO:0007669"/>
    <property type="project" value="UniProtKB-UniRule"/>
</dbReference>
<dbReference type="GO" id="GO:0046342">
    <property type="term" value="P:CDP-diacylglycerol catabolic process"/>
    <property type="evidence" value="ECO:0007669"/>
    <property type="project" value="UniProtKB-UniRule"/>
</dbReference>
<dbReference type="GO" id="GO:0008654">
    <property type="term" value="P:phospholipid biosynthetic process"/>
    <property type="evidence" value="ECO:0007669"/>
    <property type="project" value="UniProtKB-KW"/>
</dbReference>
<dbReference type="Gene3D" id="3.30.428.30">
    <property type="entry name" value="HIT family - CDH-like"/>
    <property type="match status" value="1"/>
</dbReference>
<dbReference type="HAMAP" id="MF_00319">
    <property type="entry name" value="Cdh"/>
    <property type="match status" value="1"/>
</dbReference>
<dbReference type="InterPro" id="IPR003763">
    <property type="entry name" value="CDP-diacylglyc_Pase"/>
</dbReference>
<dbReference type="InterPro" id="IPR015993">
    <property type="entry name" value="CDP-diacylglyc_Pase_proteobac"/>
</dbReference>
<dbReference type="InterPro" id="IPR036265">
    <property type="entry name" value="HIT-like_sf"/>
</dbReference>
<dbReference type="NCBIfam" id="TIGR00672">
    <property type="entry name" value="cdh"/>
    <property type="match status" value="1"/>
</dbReference>
<dbReference type="NCBIfam" id="NF003986">
    <property type="entry name" value="PRK05471.1-5"/>
    <property type="match status" value="1"/>
</dbReference>
<dbReference type="NCBIfam" id="NF003987">
    <property type="entry name" value="PRK05471.1-6"/>
    <property type="match status" value="1"/>
</dbReference>
<dbReference type="Pfam" id="PF02611">
    <property type="entry name" value="CDH"/>
    <property type="match status" value="1"/>
</dbReference>
<dbReference type="PIRSF" id="PIRSF001273">
    <property type="entry name" value="CDH"/>
    <property type="match status" value="1"/>
</dbReference>
<dbReference type="SUPFAM" id="SSF54197">
    <property type="entry name" value="HIT-like"/>
    <property type="match status" value="1"/>
</dbReference>
<feature type="chain" id="PRO_0000198583" description="CDP-diacylglycerol pyrophosphatase">
    <location>
        <begin position="1"/>
        <end position="251"/>
    </location>
</feature>
<feature type="transmembrane region" description="Helical" evidence="1">
    <location>
        <begin position="5"/>
        <end position="25"/>
    </location>
</feature>
<feature type="sequence conflict" description="In Ref. 1; CAA31757." evidence="2" ref="1">
    <original>V</original>
    <variation>L</variation>
    <location>
        <position position="13"/>
    </location>
</feature>
<protein>
    <recommendedName>
        <fullName>CDP-diacylglycerol pyrophosphatase</fullName>
        <ecNumber>3.6.1.26</ecNumber>
    </recommendedName>
    <alternativeName>
        <fullName>CDP-diacylglycerol phosphatidylhydrolase</fullName>
    </alternativeName>
    <alternativeName>
        <fullName>CDP-diglyceride hydrolase</fullName>
    </alternativeName>
</protein>
<gene>
    <name type="primary">cdh</name>
    <name type="synonym">ushB</name>
    <name type="ordered locus">STM4064</name>
</gene>
<comment type="catalytic activity">
    <reaction>
        <text>a CDP-1,2-diacyl-sn-glycerol + H2O = a 1,2-diacyl-sn-glycero-3-phosphate + CMP + 2 H(+)</text>
        <dbReference type="Rhea" id="RHEA:15221"/>
        <dbReference type="ChEBI" id="CHEBI:15377"/>
        <dbReference type="ChEBI" id="CHEBI:15378"/>
        <dbReference type="ChEBI" id="CHEBI:58332"/>
        <dbReference type="ChEBI" id="CHEBI:58608"/>
        <dbReference type="ChEBI" id="CHEBI:60377"/>
        <dbReference type="EC" id="3.6.1.26"/>
    </reaction>
</comment>
<comment type="pathway">
    <text>Phospholipid metabolism; CDP-diacylglycerol degradation; phosphatidate from CDP-diacylglycerol: step 1/1.</text>
</comment>
<comment type="subcellular location">
    <subcellularLocation>
        <location>Cell inner membrane</location>
        <topology>Single-pass membrane protein</topology>
    </subcellularLocation>
</comment>
<comment type="similarity">
    <text evidence="2">Belongs to the Cdh family.</text>
</comment>
<comment type="caution">
    <text evidence="3">Was originally thought to be a UDP-sugar hydrolase.</text>
</comment>